<organism>
    <name type="scientific">Caulobacter sp. (strain K31)</name>
    <dbReference type="NCBI Taxonomy" id="366602"/>
    <lineage>
        <taxon>Bacteria</taxon>
        <taxon>Pseudomonadati</taxon>
        <taxon>Pseudomonadota</taxon>
        <taxon>Alphaproteobacteria</taxon>
        <taxon>Caulobacterales</taxon>
        <taxon>Caulobacteraceae</taxon>
        <taxon>Caulobacter</taxon>
    </lineage>
</organism>
<reference key="1">
    <citation type="submission" date="2008-01" db="EMBL/GenBank/DDBJ databases">
        <title>Complete sequence of chromosome of Caulobacter sp. K31.</title>
        <authorList>
            <consortium name="US DOE Joint Genome Institute"/>
            <person name="Copeland A."/>
            <person name="Lucas S."/>
            <person name="Lapidus A."/>
            <person name="Barry K."/>
            <person name="Glavina del Rio T."/>
            <person name="Dalin E."/>
            <person name="Tice H."/>
            <person name="Pitluck S."/>
            <person name="Bruce D."/>
            <person name="Goodwin L."/>
            <person name="Thompson L.S."/>
            <person name="Brettin T."/>
            <person name="Detter J.C."/>
            <person name="Han C."/>
            <person name="Schmutz J."/>
            <person name="Larimer F."/>
            <person name="Land M."/>
            <person name="Hauser L."/>
            <person name="Kyrpides N."/>
            <person name="Kim E."/>
            <person name="Stephens C."/>
            <person name="Richardson P."/>
        </authorList>
    </citation>
    <scope>NUCLEOTIDE SEQUENCE [LARGE SCALE GENOMIC DNA]</scope>
    <source>
        <strain>K31</strain>
    </source>
</reference>
<protein>
    <recommendedName>
        <fullName evidence="1">Exodeoxyribonuclease 7 small subunit</fullName>
        <ecNumber evidence="1">3.1.11.6</ecNumber>
    </recommendedName>
    <alternativeName>
        <fullName evidence="1">Exodeoxyribonuclease VII small subunit</fullName>
        <shortName evidence="1">Exonuclease VII small subunit</shortName>
    </alternativeName>
</protein>
<feature type="chain" id="PRO_1000079280" description="Exodeoxyribonuclease 7 small subunit">
    <location>
        <begin position="1"/>
        <end position="80"/>
    </location>
</feature>
<gene>
    <name evidence="1" type="primary">xseB</name>
    <name type="ordered locus">Caul_3317</name>
</gene>
<dbReference type="EC" id="3.1.11.6" evidence="1"/>
<dbReference type="EMBL" id="CP000927">
    <property type="protein sequence ID" value="ABZ72444.1"/>
    <property type="molecule type" value="Genomic_DNA"/>
</dbReference>
<dbReference type="SMR" id="B0T3Y0"/>
<dbReference type="STRING" id="366602.Caul_3317"/>
<dbReference type="KEGG" id="cak:Caul_3317"/>
<dbReference type="eggNOG" id="COG1722">
    <property type="taxonomic scope" value="Bacteria"/>
</dbReference>
<dbReference type="HOGENOM" id="CLU_145918_0_3_5"/>
<dbReference type="OrthoDB" id="9808145at2"/>
<dbReference type="GO" id="GO:0005829">
    <property type="term" value="C:cytosol"/>
    <property type="evidence" value="ECO:0007669"/>
    <property type="project" value="TreeGrafter"/>
</dbReference>
<dbReference type="GO" id="GO:0009318">
    <property type="term" value="C:exodeoxyribonuclease VII complex"/>
    <property type="evidence" value="ECO:0007669"/>
    <property type="project" value="InterPro"/>
</dbReference>
<dbReference type="GO" id="GO:0008855">
    <property type="term" value="F:exodeoxyribonuclease VII activity"/>
    <property type="evidence" value="ECO:0007669"/>
    <property type="project" value="UniProtKB-UniRule"/>
</dbReference>
<dbReference type="GO" id="GO:0006308">
    <property type="term" value="P:DNA catabolic process"/>
    <property type="evidence" value="ECO:0007669"/>
    <property type="project" value="UniProtKB-UniRule"/>
</dbReference>
<dbReference type="Gene3D" id="1.10.287.1040">
    <property type="entry name" value="Exonuclease VII, small subunit"/>
    <property type="match status" value="1"/>
</dbReference>
<dbReference type="HAMAP" id="MF_00337">
    <property type="entry name" value="Exonuc_7_S"/>
    <property type="match status" value="1"/>
</dbReference>
<dbReference type="InterPro" id="IPR003761">
    <property type="entry name" value="Exonuc_VII_S"/>
</dbReference>
<dbReference type="InterPro" id="IPR037004">
    <property type="entry name" value="Exonuc_VII_ssu_sf"/>
</dbReference>
<dbReference type="NCBIfam" id="NF002139">
    <property type="entry name" value="PRK00977.1-3"/>
    <property type="match status" value="1"/>
</dbReference>
<dbReference type="NCBIfam" id="TIGR01280">
    <property type="entry name" value="xseB"/>
    <property type="match status" value="1"/>
</dbReference>
<dbReference type="PANTHER" id="PTHR34137">
    <property type="entry name" value="EXODEOXYRIBONUCLEASE 7 SMALL SUBUNIT"/>
    <property type="match status" value="1"/>
</dbReference>
<dbReference type="PANTHER" id="PTHR34137:SF1">
    <property type="entry name" value="EXODEOXYRIBONUCLEASE 7 SMALL SUBUNIT"/>
    <property type="match status" value="1"/>
</dbReference>
<dbReference type="Pfam" id="PF02609">
    <property type="entry name" value="Exonuc_VII_S"/>
    <property type="match status" value="1"/>
</dbReference>
<dbReference type="SUPFAM" id="SSF116842">
    <property type="entry name" value="XseB-like"/>
    <property type="match status" value="1"/>
</dbReference>
<evidence type="ECO:0000255" key="1">
    <source>
        <dbReference type="HAMAP-Rule" id="MF_00337"/>
    </source>
</evidence>
<name>EX7S_CAUSK</name>
<comment type="function">
    <text evidence="1">Bidirectionally degrades single-stranded DNA into large acid-insoluble oligonucleotides, which are then degraded further into small acid-soluble oligonucleotides.</text>
</comment>
<comment type="catalytic activity">
    <reaction evidence="1">
        <text>Exonucleolytic cleavage in either 5'- to 3'- or 3'- to 5'-direction to yield nucleoside 5'-phosphates.</text>
        <dbReference type="EC" id="3.1.11.6"/>
    </reaction>
</comment>
<comment type="subunit">
    <text evidence="1">Heterooligomer composed of large and small subunits.</text>
</comment>
<comment type="subcellular location">
    <subcellularLocation>
        <location evidence="1">Cytoplasm</location>
    </subcellularLocation>
</comment>
<comment type="similarity">
    <text evidence="1">Belongs to the XseB family.</text>
</comment>
<proteinExistence type="inferred from homology"/>
<accession>B0T3Y0</accession>
<keyword id="KW-0963">Cytoplasm</keyword>
<keyword id="KW-0269">Exonuclease</keyword>
<keyword id="KW-0378">Hydrolase</keyword>
<keyword id="KW-0540">Nuclease</keyword>
<sequence>MISPQDLEGMSFEQALARLEQIVGELESGKAELERSIEIYEDGAALKAHCEKKLEAARLKVEKIVLGQGGAVSAEAAEFN</sequence>